<name>NOG2_SCHPO</name>
<gene>
    <name type="primary">nog2</name>
    <name type="ORF">SPAC6F6.03c</name>
</gene>
<reference key="1">
    <citation type="journal article" date="2002" name="Nature">
        <title>The genome sequence of Schizosaccharomyces pombe.</title>
        <authorList>
            <person name="Wood V."/>
            <person name="Gwilliam R."/>
            <person name="Rajandream M.A."/>
            <person name="Lyne M.H."/>
            <person name="Lyne R."/>
            <person name="Stewart A."/>
            <person name="Sgouros J.G."/>
            <person name="Peat N."/>
            <person name="Hayles J."/>
            <person name="Baker S.G."/>
            <person name="Basham D."/>
            <person name="Bowman S."/>
            <person name="Brooks K."/>
            <person name="Brown D."/>
            <person name="Brown S."/>
            <person name="Chillingworth T."/>
            <person name="Churcher C.M."/>
            <person name="Collins M."/>
            <person name="Connor R."/>
            <person name="Cronin A."/>
            <person name="Davis P."/>
            <person name="Feltwell T."/>
            <person name="Fraser A."/>
            <person name="Gentles S."/>
            <person name="Goble A."/>
            <person name="Hamlin N."/>
            <person name="Harris D.E."/>
            <person name="Hidalgo J."/>
            <person name="Hodgson G."/>
            <person name="Holroyd S."/>
            <person name="Hornsby T."/>
            <person name="Howarth S."/>
            <person name="Huckle E.J."/>
            <person name="Hunt S."/>
            <person name="Jagels K."/>
            <person name="James K.D."/>
            <person name="Jones L."/>
            <person name="Jones M."/>
            <person name="Leather S."/>
            <person name="McDonald S."/>
            <person name="McLean J."/>
            <person name="Mooney P."/>
            <person name="Moule S."/>
            <person name="Mungall K.L."/>
            <person name="Murphy L.D."/>
            <person name="Niblett D."/>
            <person name="Odell C."/>
            <person name="Oliver K."/>
            <person name="O'Neil S."/>
            <person name="Pearson D."/>
            <person name="Quail M.A."/>
            <person name="Rabbinowitsch E."/>
            <person name="Rutherford K.M."/>
            <person name="Rutter S."/>
            <person name="Saunders D."/>
            <person name="Seeger K."/>
            <person name="Sharp S."/>
            <person name="Skelton J."/>
            <person name="Simmonds M.N."/>
            <person name="Squares R."/>
            <person name="Squares S."/>
            <person name="Stevens K."/>
            <person name="Taylor K."/>
            <person name="Taylor R.G."/>
            <person name="Tivey A."/>
            <person name="Walsh S.V."/>
            <person name="Warren T."/>
            <person name="Whitehead S."/>
            <person name="Woodward J.R."/>
            <person name="Volckaert G."/>
            <person name="Aert R."/>
            <person name="Robben J."/>
            <person name="Grymonprez B."/>
            <person name="Weltjens I."/>
            <person name="Vanstreels E."/>
            <person name="Rieger M."/>
            <person name="Schaefer M."/>
            <person name="Mueller-Auer S."/>
            <person name="Gabel C."/>
            <person name="Fuchs M."/>
            <person name="Duesterhoeft A."/>
            <person name="Fritzc C."/>
            <person name="Holzer E."/>
            <person name="Moestl D."/>
            <person name="Hilbert H."/>
            <person name="Borzym K."/>
            <person name="Langer I."/>
            <person name="Beck A."/>
            <person name="Lehrach H."/>
            <person name="Reinhardt R."/>
            <person name="Pohl T.M."/>
            <person name="Eger P."/>
            <person name="Zimmermann W."/>
            <person name="Wedler H."/>
            <person name="Wambutt R."/>
            <person name="Purnelle B."/>
            <person name="Goffeau A."/>
            <person name="Cadieu E."/>
            <person name="Dreano S."/>
            <person name="Gloux S."/>
            <person name="Lelaure V."/>
            <person name="Mottier S."/>
            <person name="Galibert F."/>
            <person name="Aves S.J."/>
            <person name="Xiang Z."/>
            <person name="Hunt C."/>
            <person name="Moore K."/>
            <person name="Hurst S.M."/>
            <person name="Lucas M."/>
            <person name="Rochet M."/>
            <person name="Gaillardin C."/>
            <person name="Tallada V.A."/>
            <person name="Garzon A."/>
            <person name="Thode G."/>
            <person name="Daga R.R."/>
            <person name="Cruzado L."/>
            <person name="Jimenez J."/>
            <person name="Sanchez M."/>
            <person name="del Rey F."/>
            <person name="Benito J."/>
            <person name="Dominguez A."/>
            <person name="Revuelta J.L."/>
            <person name="Moreno S."/>
            <person name="Armstrong J."/>
            <person name="Forsburg S.L."/>
            <person name="Cerutti L."/>
            <person name="Lowe T."/>
            <person name="McCombie W.R."/>
            <person name="Paulsen I."/>
            <person name="Potashkin J."/>
            <person name="Shpakovski G.V."/>
            <person name="Ussery D."/>
            <person name="Barrell B.G."/>
            <person name="Nurse P."/>
        </authorList>
    </citation>
    <scope>NUCLEOTIDE SEQUENCE [LARGE SCALE GENOMIC DNA]</scope>
    <source>
        <strain>972 / ATCC 24843</strain>
    </source>
</reference>
<reference key="2">
    <citation type="journal article" date="2000" name="Genes Cells">
        <title>Large-scale screening of intracellular protein localization in living fission yeast cells by the use of a GFP-fusion genomic DNA library.</title>
        <authorList>
            <person name="Ding D.-Q."/>
            <person name="Tomita Y."/>
            <person name="Yamamoto A."/>
            <person name="Chikashige Y."/>
            <person name="Haraguchi T."/>
            <person name="Hiraoka Y."/>
        </authorList>
    </citation>
    <scope>NUCLEOTIDE SEQUENCE [LARGE SCALE GENOMIC DNA] OF 1-104</scope>
    <scope>SUBCELLULAR LOCATION</scope>
    <source>
        <strain>ATCC 38364 / 968</strain>
    </source>
</reference>
<reference key="3">
    <citation type="journal article" date="2008" name="J. Proteome Res.">
        <title>Phosphoproteome analysis of fission yeast.</title>
        <authorList>
            <person name="Wilson-Grady J.T."/>
            <person name="Villen J."/>
            <person name="Gygi S.P."/>
        </authorList>
    </citation>
    <scope>PHOSPHORYLATION [LARGE SCALE ANALYSIS] AT SER-186; THR-484 AND SER-487</scope>
    <scope>IDENTIFICATION BY MASS SPECTROMETRY</scope>
</reference>
<dbReference type="EMBL" id="CU329670">
    <property type="protein sequence ID" value="CAB11727.1"/>
    <property type="molecule type" value="Genomic_DNA"/>
</dbReference>
<dbReference type="EMBL" id="AB028005">
    <property type="protein sequence ID" value="BAA87309.1"/>
    <property type="molecule type" value="Genomic_DNA"/>
</dbReference>
<dbReference type="PIR" id="T39037">
    <property type="entry name" value="T39037"/>
</dbReference>
<dbReference type="RefSeq" id="NP_593896.1">
    <property type="nucleotide sequence ID" value="NM_001019326.2"/>
</dbReference>
<dbReference type="SMR" id="O14236"/>
<dbReference type="BioGRID" id="279226">
    <property type="interactions" value="9"/>
</dbReference>
<dbReference type="FunCoup" id="O14236">
    <property type="interactions" value="507"/>
</dbReference>
<dbReference type="STRING" id="284812.O14236"/>
<dbReference type="iPTMnet" id="O14236"/>
<dbReference type="PaxDb" id="4896-SPAC6F6.03c.1"/>
<dbReference type="EnsemblFungi" id="SPAC6F6.03c.1">
    <property type="protein sequence ID" value="SPAC6F6.03c.1:pep"/>
    <property type="gene ID" value="SPAC6F6.03c"/>
</dbReference>
<dbReference type="GeneID" id="2542777"/>
<dbReference type="KEGG" id="spo:2542777"/>
<dbReference type="PomBase" id="SPAC6F6.03c">
    <property type="gene designation" value="nog2"/>
</dbReference>
<dbReference type="VEuPathDB" id="FungiDB:SPAC6F6.03c"/>
<dbReference type="eggNOG" id="KOG2423">
    <property type="taxonomic scope" value="Eukaryota"/>
</dbReference>
<dbReference type="HOGENOM" id="CLU_011106_4_0_1"/>
<dbReference type="InParanoid" id="O14236"/>
<dbReference type="OMA" id="KNPEDHI"/>
<dbReference type="PhylomeDB" id="O14236"/>
<dbReference type="PRO" id="PR:O14236"/>
<dbReference type="Proteomes" id="UP000002485">
    <property type="component" value="Chromosome I"/>
</dbReference>
<dbReference type="GO" id="GO:0072686">
    <property type="term" value="C:mitotic spindle"/>
    <property type="evidence" value="ECO:0007005"/>
    <property type="project" value="PomBase"/>
</dbReference>
<dbReference type="GO" id="GO:0005730">
    <property type="term" value="C:nucleolus"/>
    <property type="evidence" value="ECO:0000318"/>
    <property type="project" value="GO_Central"/>
</dbReference>
<dbReference type="GO" id="GO:0005634">
    <property type="term" value="C:nucleus"/>
    <property type="evidence" value="ECO:0007005"/>
    <property type="project" value="PomBase"/>
</dbReference>
<dbReference type="GO" id="GO:0005525">
    <property type="term" value="F:GTP binding"/>
    <property type="evidence" value="ECO:0000266"/>
    <property type="project" value="PomBase"/>
</dbReference>
<dbReference type="GO" id="GO:0003924">
    <property type="term" value="F:GTPase activity"/>
    <property type="evidence" value="ECO:0000266"/>
    <property type="project" value="PomBase"/>
</dbReference>
<dbReference type="GO" id="GO:0000055">
    <property type="term" value="P:ribosomal large subunit export from nucleus"/>
    <property type="evidence" value="ECO:0000266"/>
    <property type="project" value="PomBase"/>
</dbReference>
<dbReference type="CDD" id="cd01858">
    <property type="entry name" value="NGP_1"/>
    <property type="match status" value="1"/>
</dbReference>
<dbReference type="FunFam" id="3.40.50.300:FF:000559">
    <property type="entry name" value="Nuclear/nucleolar GTPase 2"/>
    <property type="match status" value="1"/>
</dbReference>
<dbReference type="FunFam" id="1.10.1580.10:FF:000001">
    <property type="entry name" value="Nucleolar GTP-binding protein 2"/>
    <property type="match status" value="1"/>
</dbReference>
<dbReference type="Gene3D" id="1.10.1580.10">
    <property type="match status" value="1"/>
</dbReference>
<dbReference type="Gene3D" id="3.40.50.300">
    <property type="entry name" value="P-loop containing nucleotide triphosphate hydrolases"/>
    <property type="match status" value="1"/>
</dbReference>
<dbReference type="InterPro" id="IPR030378">
    <property type="entry name" value="G_CP_dom"/>
</dbReference>
<dbReference type="InterPro" id="IPR024929">
    <property type="entry name" value="GNL2_CP_dom"/>
</dbReference>
<dbReference type="InterPro" id="IPR006073">
    <property type="entry name" value="GTP-bd"/>
</dbReference>
<dbReference type="InterPro" id="IPR023179">
    <property type="entry name" value="GTP-bd_ortho_bundle_sf"/>
</dbReference>
<dbReference type="InterPro" id="IPR012971">
    <property type="entry name" value="NOG2_N_dom"/>
</dbReference>
<dbReference type="InterPro" id="IPR027417">
    <property type="entry name" value="P-loop_NTPase"/>
</dbReference>
<dbReference type="InterPro" id="IPR050755">
    <property type="entry name" value="TRAFAC_YlqF/YawG_RiboMat"/>
</dbReference>
<dbReference type="PANTHER" id="PTHR11089">
    <property type="entry name" value="GTP-BINDING PROTEIN-RELATED"/>
    <property type="match status" value="1"/>
</dbReference>
<dbReference type="PANTHER" id="PTHR11089:SF9">
    <property type="entry name" value="NUCLEOLAR GTP-BINDING PROTEIN 2"/>
    <property type="match status" value="1"/>
</dbReference>
<dbReference type="Pfam" id="PF01926">
    <property type="entry name" value="MMR_HSR1"/>
    <property type="match status" value="1"/>
</dbReference>
<dbReference type="Pfam" id="PF08153">
    <property type="entry name" value="NGP1NT"/>
    <property type="match status" value="1"/>
</dbReference>
<dbReference type="PRINTS" id="PR00326">
    <property type="entry name" value="GTP1OBG"/>
</dbReference>
<dbReference type="SUPFAM" id="SSF52540">
    <property type="entry name" value="P-loop containing nucleoside triphosphate hydrolases"/>
    <property type="match status" value="1"/>
</dbReference>
<dbReference type="PROSITE" id="PS51721">
    <property type="entry name" value="G_CP"/>
    <property type="match status" value="1"/>
</dbReference>
<protein>
    <recommendedName>
        <fullName>Nucleolar GTP-binding protein 2</fullName>
    </recommendedName>
</protein>
<keyword id="KW-0342">GTP-binding</keyword>
<keyword id="KW-0547">Nucleotide-binding</keyword>
<keyword id="KW-0539">Nucleus</keyword>
<keyword id="KW-0597">Phosphoprotein</keyword>
<keyword id="KW-1185">Reference proteome</keyword>
<keyword id="KW-0690">Ribosome biogenesis</keyword>
<feature type="chain" id="PRO_0000215815" description="Nucleolar GTP-binding protein 2">
    <location>
        <begin position="1"/>
        <end position="537"/>
    </location>
</feature>
<feature type="domain" description="CP-type G" evidence="3">
    <location>
        <begin position="207"/>
        <end position="368"/>
    </location>
</feature>
<feature type="region of interest" description="Disordered" evidence="4">
    <location>
        <begin position="1"/>
        <end position="24"/>
    </location>
</feature>
<feature type="region of interest" description="Disordered" evidence="4">
    <location>
        <begin position="468"/>
        <end position="537"/>
    </location>
</feature>
<feature type="compositionally biased region" description="Polar residues" evidence="4">
    <location>
        <begin position="468"/>
        <end position="486"/>
    </location>
</feature>
<feature type="compositionally biased region" description="Acidic residues" evidence="4">
    <location>
        <begin position="487"/>
        <end position="496"/>
    </location>
</feature>
<feature type="compositionally biased region" description="Basic and acidic residues" evidence="4">
    <location>
        <begin position="497"/>
        <end position="512"/>
    </location>
</feature>
<feature type="binding site" evidence="2">
    <location>
        <begin position="317"/>
        <end position="324"/>
    </location>
    <ligand>
        <name>GTP</name>
        <dbReference type="ChEBI" id="CHEBI:37565"/>
    </ligand>
</feature>
<feature type="binding site" evidence="2">
    <location>
        <begin position="361"/>
        <end position="365"/>
    </location>
    <ligand>
        <name>GTP</name>
        <dbReference type="ChEBI" id="CHEBI:37565"/>
    </ligand>
</feature>
<feature type="modified residue" description="Phosphoserine" evidence="6">
    <location>
        <position position="186"/>
    </location>
</feature>
<feature type="modified residue" description="Phosphothreonine" evidence="6">
    <location>
        <position position="484"/>
    </location>
</feature>
<feature type="modified residue" description="Phosphoserine" evidence="6">
    <location>
        <position position="487"/>
    </location>
</feature>
<evidence type="ECO:0000250" key="1"/>
<evidence type="ECO:0000255" key="2"/>
<evidence type="ECO:0000255" key="3">
    <source>
        <dbReference type="PROSITE-ProRule" id="PRU01058"/>
    </source>
</evidence>
<evidence type="ECO:0000256" key="4">
    <source>
        <dbReference type="SAM" id="MobiDB-lite"/>
    </source>
</evidence>
<evidence type="ECO:0000269" key="5">
    <source>
    </source>
</evidence>
<evidence type="ECO:0000269" key="6">
    <source>
    </source>
</evidence>
<sequence length="537" mass="59914">MGTYKKEKSRIGREGANEKKPGNLRVKGENFYRNAKDVARVNMYRGGKAKYNAAGELVRAAEFQSSEVPKARIQPDRRWFNNTRVIAQPTLTQFREAMGQKLNDPYQVLLRRNKLPMSLLQENTEIPKVRVLESEPFENTFGPKSQRKRPKISFDSVAELAKESDEKQNAYEEKIEERILANPDESDDVMLAARDAIFSKGQSKRIWNELYKVIDSSDVLIQVLDARDPVGTRCGTVERYLRNEASHKHMILVLNKVDLVPTSVAAAWVKILAKEYPTIAFHASINNSFGKGSLIQILRQFASLHSDKKQISVGLIGFPNAGKSSIINTLRKKKVCNVAPIPGETKVWQYVALMKRIFLIDCPGIVPPSSNDSDAELLLKGVVRVENVSNPEAYIPTVLSRCKVKHLERTYEISGWNDSTEFLAKLAKKGGRLLKGGEPDEASVAKMVLNDFMRGKIPWFIGPKGLSSSNDEINSSQKVATQQTEGSDQDGEEAEEEWHGISDDGKADESESTKPVAEGSASESTDESAVDDNKNRS</sequence>
<comment type="function">
    <text evidence="1">GTPase that associates with pre-60S ribosomal subunits in the nucleolus and is required for their nuclear export and maturation.</text>
</comment>
<comment type="subcellular location">
    <subcellularLocation>
        <location evidence="5">Nucleus</location>
        <location evidence="5">Nucleolus</location>
    </subcellularLocation>
</comment>
<comment type="similarity">
    <text evidence="3">Belongs to the TRAFAC class YlqF/YawG GTPase family. NOG2 subfamily.</text>
</comment>
<accession>O14236</accession>
<accession>Q9US70</accession>
<organism>
    <name type="scientific">Schizosaccharomyces pombe (strain 972 / ATCC 24843)</name>
    <name type="common">Fission yeast</name>
    <dbReference type="NCBI Taxonomy" id="284812"/>
    <lineage>
        <taxon>Eukaryota</taxon>
        <taxon>Fungi</taxon>
        <taxon>Dikarya</taxon>
        <taxon>Ascomycota</taxon>
        <taxon>Taphrinomycotina</taxon>
        <taxon>Schizosaccharomycetes</taxon>
        <taxon>Schizosaccharomycetales</taxon>
        <taxon>Schizosaccharomycetaceae</taxon>
        <taxon>Schizosaccharomyces</taxon>
    </lineage>
</organism>
<proteinExistence type="evidence at protein level"/>